<dbReference type="EC" id="2.7.11.-" evidence="1"/>
<dbReference type="EC" id="2.7.4.-" evidence="1"/>
<dbReference type="EMBL" id="AF343443">
    <property type="protein sequence ID" value="AAK54064.1"/>
    <property type="molecule type" value="Genomic_DNA"/>
</dbReference>
<dbReference type="EMBL" id="CP000416">
    <property type="protein sequence ID" value="ABJ63786.1"/>
    <property type="molecule type" value="Genomic_DNA"/>
</dbReference>
<dbReference type="RefSeq" id="WP_011667418.1">
    <property type="nucleotide sequence ID" value="NC_008497.1"/>
</dbReference>
<dbReference type="SMR" id="Q93TM7"/>
<dbReference type="STRING" id="387344.LVIS_0641"/>
<dbReference type="GeneID" id="56992458"/>
<dbReference type="KEGG" id="lbr:LVIS_0641"/>
<dbReference type="eggNOG" id="COG1493">
    <property type="taxonomic scope" value="Bacteria"/>
</dbReference>
<dbReference type="HOGENOM" id="CLU_052030_0_1_9"/>
<dbReference type="Proteomes" id="UP000001652">
    <property type="component" value="Chromosome"/>
</dbReference>
<dbReference type="GO" id="GO:0005524">
    <property type="term" value="F:ATP binding"/>
    <property type="evidence" value="ECO:0007669"/>
    <property type="project" value="UniProtKB-UniRule"/>
</dbReference>
<dbReference type="GO" id="GO:0000287">
    <property type="term" value="F:magnesium ion binding"/>
    <property type="evidence" value="ECO:0007669"/>
    <property type="project" value="UniProtKB-UniRule"/>
</dbReference>
<dbReference type="GO" id="GO:0000155">
    <property type="term" value="F:phosphorelay sensor kinase activity"/>
    <property type="evidence" value="ECO:0007669"/>
    <property type="project" value="InterPro"/>
</dbReference>
<dbReference type="GO" id="GO:0004674">
    <property type="term" value="F:protein serine/threonine kinase activity"/>
    <property type="evidence" value="ECO:0007669"/>
    <property type="project" value="UniProtKB-KW"/>
</dbReference>
<dbReference type="GO" id="GO:0004712">
    <property type="term" value="F:protein serine/threonine/tyrosine kinase activity"/>
    <property type="evidence" value="ECO:0007669"/>
    <property type="project" value="UniProtKB-UniRule"/>
</dbReference>
<dbReference type="GO" id="GO:0006109">
    <property type="term" value="P:regulation of carbohydrate metabolic process"/>
    <property type="evidence" value="ECO:0007669"/>
    <property type="project" value="UniProtKB-UniRule"/>
</dbReference>
<dbReference type="CDD" id="cd01918">
    <property type="entry name" value="HprK_C"/>
    <property type="match status" value="1"/>
</dbReference>
<dbReference type="FunFam" id="3.40.50.300:FF:000174">
    <property type="entry name" value="HPr kinase/phosphorylase"/>
    <property type="match status" value="1"/>
</dbReference>
<dbReference type="Gene3D" id="3.40.1390.20">
    <property type="entry name" value="HprK N-terminal domain-like"/>
    <property type="match status" value="1"/>
</dbReference>
<dbReference type="Gene3D" id="3.40.50.300">
    <property type="entry name" value="P-loop containing nucleotide triphosphate hydrolases"/>
    <property type="match status" value="1"/>
</dbReference>
<dbReference type="HAMAP" id="MF_01249">
    <property type="entry name" value="HPr_kinase"/>
    <property type="match status" value="1"/>
</dbReference>
<dbReference type="InterPro" id="IPR003755">
    <property type="entry name" value="HPr(Ser)_kin/Pase"/>
</dbReference>
<dbReference type="InterPro" id="IPR011104">
    <property type="entry name" value="Hpr_kin/Pase_C"/>
</dbReference>
<dbReference type="InterPro" id="IPR011126">
    <property type="entry name" value="Hpr_kin/Pase_Hpr_N"/>
</dbReference>
<dbReference type="InterPro" id="IPR027417">
    <property type="entry name" value="P-loop_NTPase"/>
</dbReference>
<dbReference type="InterPro" id="IPR028979">
    <property type="entry name" value="Ser_kin/Pase_Hpr-like_N_sf"/>
</dbReference>
<dbReference type="NCBIfam" id="TIGR00679">
    <property type="entry name" value="hpr-ser"/>
    <property type="match status" value="1"/>
</dbReference>
<dbReference type="PANTHER" id="PTHR30305:SF1">
    <property type="entry name" value="HPR KINASE_PHOSPHORYLASE"/>
    <property type="match status" value="1"/>
</dbReference>
<dbReference type="PANTHER" id="PTHR30305">
    <property type="entry name" value="PROTEIN YJDM-RELATED"/>
    <property type="match status" value="1"/>
</dbReference>
<dbReference type="Pfam" id="PF07475">
    <property type="entry name" value="Hpr_kinase_C"/>
    <property type="match status" value="1"/>
</dbReference>
<dbReference type="Pfam" id="PF02603">
    <property type="entry name" value="Hpr_kinase_N"/>
    <property type="match status" value="1"/>
</dbReference>
<dbReference type="SUPFAM" id="SSF75138">
    <property type="entry name" value="HprK N-terminal domain-like"/>
    <property type="match status" value="1"/>
</dbReference>
<dbReference type="SUPFAM" id="SSF53795">
    <property type="entry name" value="PEP carboxykinase-like"/>
    <property type="match status" value="1"/>
</dbReference>
<accession>Q93TM7</accession>
<accession>Q03SN6</accession>
<organism>
    <name type="scientific">Levilactobacillus brevis (strain ATCC 367 / BCRC 12310 / CIP 105137 / JCM 1170 / LMG 11437 / NCIMB 947 / NCTC 947)</name>
    <name type="common">Lactobacillus brevis</name>
    <dbReference type="NCBI Taxonomy" id="387344"/>
    <lineage>
        <taxon>Bacteria</taxon>
        <taxon>Bacillati</taxon>
        <taxon>Bacillota</taxon>
        <taxon>Bacilli</taxon>
        <taxon>Lactobacillales</taxon>
        <taxon>Lactobacillaceae</taxon>
        <taxon>Levilactobacillus</taxon>
    </lineage>
</organism>
<protein>
    <recommendedName>
        <fullName evidence="1">HPr kinase/phosphorylase</fullName>
        <shortName evidence="1">HPrK/P</shortName>
        <ecNumber evidence="1">2.7.11.-</ecNumber>
        <ecNumber evidence="1">2.7.4.-</ecNumber>
    </recommendedName>
    <alternativeName>
        <fullName evidence="1">HPr(Ser) kinase/phosphorylase</fullName>
    </alternativeName>
</protein>
<evidence type="ECO:0000255" key="1">
    <source>
        <dbReference type="HAMAP-Rule" id="MF_01249"/>
    </source>
</evidence>
<feature type="chain" id="PRO_0000058958" description="HPr kinase/phosphorylase">
    <location>
        <begin position="1"/>
        <end position="311"/>
    </location>
</feature>
<feature type="region of interest" description="Important for the catalytic mechanism of both phosphorylation and dephosphorylation" evidence="1">
    <location>
        <begin position="202"/>
        <end position="211"/>
    </location>
</feature>
<feature type="region of interest" description="Important for the catalytic mechanism of dephosphorylation" evidence="1">
    <location>
        <begin position="265"/>
        <end position="270"/>
    </location>
</feature>
<feature type="active site" evidence="1">
    <location>
        <position position="139"/>
    </location>
</feature>
<feature type="active site" evidence="1">
    <location>
        <position position="160"/>
    </location>
</feature>
<feature type="active site" description="Proton acceptor; for phosphorylation activity. Proton donor; for dephosphorylation activity" evidence="1">
    <location>
        <position position="178"/>
    </location>
</feature>
<feature type="active site" evidence="1">
    <location>
        <position position="244"/>
    </location>
</feature>
<feature type="binding site" evidence="1">
    <location>
        <begin position="154"/>
        <end position="161"/>
    </location>
    <ligand>
        <name>ATP</name>
        <dbReference type="ChEBI" id="CHEBI:30616"/>
    </ligand>
</feature>
<feature type="binding site" evidence="1">
    <location>
        <position position="161"/>
    </location>
    <ligand>
        <name>Mg(2+)</name>
        <dbReference type="ChEBI" id="CHEBI:18420"/>
    </ligand>
</feature>
<feature type="binding site" evidence="1">
    <location>
        <position position="203"/>
    </location>
    <ligand>
        <name>Mg(2+)</name>
        <dbReference type="ChEBI" id="CHEBI:18420"/>
    </ligand>
</feature>
<reference key="1">
    <citation type="journal article" date="2001" name="J. Bacteriol.">
        <title>Genes involved in control of galactose uptake in Lactobacillus brevis and reconstitution of the regulatory system in Bacillus subtilis.</title>
        <authorList>
            <person name="Djordjevic G.M."/>
            <person name="Tchieu J.H."/>
            <person name="Saier M.H. Jr."/>
        </authorList>
    </citation>
    <scope>NUCLEOTIDE SEQUENCE [GENOMIC DNA]</scope>
</reference>
<reference key="2">
    <citation type="journal article" date="2006" name="Proc. Natl. Acad. Sci. U.S.A.">
        <title>Comparative genomics of the lactic acid bacteria.</title>
        <authorList>
            <person name="Makarova K.S."/>
            <person name="Slesarev A."/>
            <person name="Wolf Y.I."/>
            <person name="Sorokin A."/>
            <person name="Mirkin B."/>
            <person name="Koonin E.V."/>
            <person name="Pavlov A."/>
            <person name="Pavlova N."/>
            <person name="Karamychev V."/>
            <person name="Polouchine N."/>
            <person name="Shakhova V."/>
            <person name="Grigoriev I."/>
            <person name="Lou Y."/>
            <person name="Rohksar D."/>
            <person name="Lucas S."/>
            <person name="Huang K."/>
            <person name="Goodstein D.M."/>
            <person name="Hawkins T."/>
            <person name="Plengvidhya V."/>
            <person name="Welker D."/>
            <person name="Hughes J."/>
            <person name="Goh Y."/>
            <person name="Benson A."/>
            <person name="Baldwin K."/>
            <person name="Lee J.-H."/>
            <person name="Diaz-Muniz I."/>
            <person name="Dosti B."/>
            <person name="Smeianov V."/>
            <person name="Wechter W."/>
            <person name="Barabote R."/>
            <person name="Lorca G."/>
            <person name="Altermann E."/>
            <person name="Barrangou R."/>
            <person name="Ganesan B."/>
            <person name="Xie Y."/>
            <person name="Rawsthorne H."/>
            <person name="Tamir D."/>
            <person name="Parker C."/>
            <person name="Breidt F."/>
            <person name="Broadbent J.R."/>
            <person name="Hutkins R."/>
            <person name="O'Sullivan D."/>
            <person name="Steele J."/>
            <person name="Unlu G."/>
            <person name="Saier M.H. Jr."/>
            <person name="Klaenhammer T."/>
            <person name="Richardson P."/>
            <person name="Kozyavkin S."/>
            <person name="Weimer B.C."/>
            <person name="Mills D.A."/>
        </authorList>
    </citation>
    <scope>NUCLEOTIDE SEQUENCE [LARGE SCALE GENOMIC DNA]</scope>
    <source>
        <strain>ATCC 367 / BCRC 12310 / CIP 105137 / JCM 1170 / LMG 11437 / NCIMB 947 / NCTC 947</strain>
    </source>
</reference>
<gene>
    <name evidence="1" type="primary">hprK</name>
    <name type="synonym">ptsK</name>
    <name type="ordered locus">LVIS_0641</name>
</gene>
<comment type="function">
    <text evidence="1">Catalyzes the ATP- as well as the pyrophosphate-dependent phosphorylation of a specific serine residue in HPr, a phosphocarrier protein of the phosphoenolpyruvate-dependent sugar phosphotransferase system (PTS). HprK/P also catalyzes the pyrophosphate-producing, inorganic phosphate-dependent dephosphorylation (phosphorolysis) of seryl-phosphorylated HPr (P-Ser-HPr). The two antagonistic activities of HprK/P are regulated by several intracellular metabolites, which change their concentration in response to the absence or presence of rapidly metabolisable carbon sources (glucose, fructose, etc.) in the growth medium. Therefore, by controlling the phosphorylation state of HPr, HPrK/P is a sensor enzyme that plays a major role in the regulation of carbon metabolism and sugar transport: it mediates carbon catabolite repression (CCR), and regulates PTS-catalyzed carbohydrate uptake and inducer exclusion.</text>
</comment>
<comment type="catalytic activity">
    <reaction evidence="1">
        <text>[HPr protein]-L-serine + ATP = [HPr protein]-O-phospho-L-serine + ADP + H(+)</text>
        <dbReference type="Rhea" id="RHEA:46600"/>
        <dbReference type="Rhea" id="RHEA-COMP:11602"/>
        <dbReference type="Rhea" id="RHEA-COMP:11603"/>
        <dbReference type="ChEBI" id="CHEBI:15378"/>
        <dbReference type="ChEBI" id="CHEBI:29999"/>
        <dbReference type="ChEBI" id="CHEBI:30616"/>
        <dbReference type="ChEBI" id="CHEBI:83421"/>
        <dbReference type="ChEBI" id="CHEBI:456216"/>
    </reaction>
</comment>
<comment type="catalytic activity">
    <reaction evidence="1">
        <text>[HPr protein]-O-phospho-L-serine + phosphate + H(+) = [HPr protein]-L-serine + diphosphate</text>
        <dbReference type="Rhea" id="RHEA:46604"/>
        <dbReference type="Rhea" id="RHEA-COMP:11602"/>
        <dbReference type="Rhea" id="RHEA-COMP:11603"/>
        <dbReference type="ChEBI" id="CHEBI:15378"/>
        <dbReference type="ChEBI" id="CHEBI:29999"/>
        <dbReference type="ChEBI" id="CHEBI:33019"/>
        <dbReference type="ChEBI" id="CHEBI:43474"/>
        <dbReference type="ChEBI" id="CHEBI:83421"/>
    </reaction>
</comment>
<comment type="cofactor">
    <cofactor evidence="1">
        <name>Mg(2+)</name>
        <dbReference type="ChEBI" id="CHEBI:18420"/>
    </cofactor>
</comment>
<comment type="subunit">
    <text evidence="1">Homohexamer.</text>
</comment>
<comment type="domain">
    <text evidence="1">The Walker A ATP-binding motif also binds Pi and PPi.</text>
</comment>
<comment type="miscellaneous">
    <text evidence="1">Both phosphorylation and phosphorolysis are carried out by the same active site and suggest a common mechanism for both reactions.</text>
</comment>
<comment type="similarity">
    <text evidence="1">Belongs to the HPrK/P family.</text>
</comment>
<name>HPRK_LEVBA</name>
<keyword id="KW-0067">ATP-binding</keyword>
<keyword id="KW-0119">Carbohydrate metabolism</keyword>
<keyword id="KW-0418">Kinase</keyword>
<keyword id="KW-0460">Magnesium</keyword>
<keyword id="KW-0479">Metal-binding</keyword>
<keyword id="KW-0511">Multifunctional enzyme</keyword>
<keyword id="KW-0547">Nucleotide-binding</keyword>
<keyword id="KW-1185">Reference proteome</keyword>
<keyword id="KW-0723">Serine/threonine-protein kinase</keyword>
<keyword id="KW-0808">Transferase</keyword>
<proteinExistence type="inferred from homology"/>
<sequence length="311" mass="34376">MTESVTVAELVKANRLDVYTGKDNLDRKITTSDISRPGLELTGYFNYYPAKRVQLLGITETSFAKGMSHKELLNVMRKMCQPETPAFVISTQLDPPEELTQSAEEAGIPILGTKLTTSRVLSNMTNFLEGKLAERQSVHGVLVDIYGVGVMITGDSGVGKSETALELVKRGHRLIADDRVEVYQQDEQTLVGAAPAILSHLLEIRGIGIIDVMNLFGAGAVRSETDIDLIVHLELWQDDNHFDRLGNNSETQRFFDVVVPKISIPVKTGRNLAIIIEAAAMNFRARSMGYDATKVFDDNLKRLIKQNANKS</sequence>